<gene>
    <name evidence="1" type="primary">ung</name>
    <name type="ordered locus">HPAG1_1294</name>
</gene>
<proteinExistence type="inferred from homology"/>
<protein>
    <recommendedName>
        <fullName evidence="1">Uracil-DNA glycosylase</fullName>
        <shortName evidence="1">UDG</shortName>
        <ecNumber evidence="1">3.2.2.27</ecNumber>
    </recommendedName>
</protein>
<dbReference type="EC" id="3.2.2.27" evidence="1"/>
<dbReference type="EMBL" id="CP000241">
    <property type="protein sequence ID" value="ABF85361.1"/>
    <property type="molecule type" value="Genomic_DNA"/>
</dbReference>
<dbReference type="RefSeq" id="WP_000764894.1">
    <property type="nucleotide sequence ID" value="NC_008086.1"/>
</dbReference>
<dbReference type="SMR" id="Q1CRR1"/>
<dbReference type="KEGG" id="hpa:HPAG1_1294"/>
<dbReference type="HOGENOM" id="CLU_032162_3_2_7"/>
<dbReference type="GO" id="GO:0005737">
    <property type="term" value="C:cytoplasm"/>
    <property type="evidence" value="ECO:0007669"/>
    <property type="project" value="UniProtKB-SubCell"/>
</dbReference>
<dbReference type="GO" id="GO:0004844">
    <property type="term" value="F:uracil DNA N-glycosylase activity"/>
    <property type="evidence" value="ECO:0007669"/>
    <property type="project" value="UniProtKB-UniRule"/>
</dbReference>
<dbReference type="GO" id="GO:0097510">
    <property type="term" value="P:base-excision repair, AP site formation via deaminated base removal"/>
    <property type="evidence" value="ECO:0007669"/>
    <property type="project" value="TreeGrafter"/>
</dbReference>
<dbReference type="CDD" id="cd10027">
    <property type="entry name" value="UDG-F1-like"/>
    <property type="match status" value="1"/>
</dbReference>
<dbReference type="Gene3D" id="3.40.470.10">
    <property type="entry name" value="Uracil-DNA glycosylase-like domain"/>
    <property type="match status" value="1"/>
</dbReference>
<dbReference type="HAMAP" id="MF_00148">
    <property type="entry name" value="UDG"/>
    <property type="match status" value="1"/>
</dbReference>
<dbReference type="InterPro" id="IPR002043">
    <property type="entry name" value="UDG_fam1"/>
</dbReference>
<dbReference type="InterPro" id="IPR018085">
    <property type="entry name" value="Ura-DNA_Glyclase_AS"/>
</dbReference>
<dbReference type="InterPro" id="IPR005122">
    <property type="entry name" value="Uracil-DNA_glycosylase-like"/>
</dbReference>
<dbReference type="InterPro" id="IPR036895">
    <property type="entry name" value="Uracil-DNA_glycosylase-like_sf"/>
</dbReference>
<dbReference type="NCBIfam" id="NF003588">
    <property type="entry name" value="PRK05254.1-1"/>
    <property type="match status" value="1"/>
</dbReference>
<dbReference type="NCBIfam" id="NF003589">
    <property type="entry name" value="PRK05254.1-2"/>
    <property type="match status" value="1"/>
</dbReference>
<dbReference type="NCBIfam" id="NF003592">
    <property type="entry name" value="PRK05254.1-5"/>
    <property type="match status" value="1"/>
</dbReference>
<dbReference type="NCBIfam" id="TIGR00628">
    <property type="entry name" value="ung"/>
    <property type="match status" value="1"/>
</dbReference>
<dbReference type="PANTHER" id="PTHR11264">
    <property type="entry name" value="URACIL-DNA GLYCOSYLASE"/>
    <property type="match status" value="1"/>
</dbReference>
<dbReference type="PANTHER" id="PTHR11264:SF0">
    <property type="entry name" value="URACIL-DNA GLYCOSYLASE"/>
    <property type="match status" value="1"/>
</dbReference>
<dbReference type="Pfam" id="PF03167">
    <property type="entry name" value="UDG"/>
    <property type="match status" value="1"/>
</dbReference>
<dbReference type="SMART" id="SM00986">
    <property type="entry name" value="UDG"/>
    <property type="match status" value="1"/>
</dbReference>
<dbReference type="SMART" id="SM00987">
    <property type="entry name" value="UreE_C"/>
    <property type="match status" value="1"/>
</dbReference>
<dbReference type="SUPFAM" id="SSF52141">
    <property type="entry name" value="Uracil-DNA glycosylase-like"/>
    <property type="match status" value="1"/>
</dbReference>
<dbReference type="PROSITE" id="PS00130">
    <property type="entry name" value="U_DNA_GLYCOSYLASE"/>
    <property type="match status" value="1"/>
</dbReference>
<accession>Q1CRR1</accession>
<comment type="function">
    <text evidence="1">Excises uracil residues from the DNA which can arise as a result of misincorporation of dUMP residues by DNA polymerase or due to deamination of cytosine.</text>
</comment>
<comment type="catalytic activity">
    <reaction evidence="1">
        <text>Hydrolyzes single-stranded DNA or mismatched double-stranded DNA and polynucleotides, releasing free uracil.</text>
        <dbReference type="EC" id="3.2.2.27"/>
    </reaction>
</comment>
<comment type="subcellular location">
    <subcellularLocation>
        <location evidence="1">Cytoplasm</location>
    </subcellularLocation>
</comment>
<comment type="similarity">
    <text evidence="1">Belongs to the uracil-DNA glycosylase (UDG) superfamily. UNG family.</text>
</comment>
<evidence type="ECO:0000255" key="1">
    <source>
        <dbReference type="HAMAP-Rule" id="MF_00148"/>
    </source>
</evidence>
<feature type="chain" id="PRO_1000009900" description="Uracil-DNA glycosylase">
    <location>
        <begin position="1"/>
        <end position="233"/>
    </location>
</feature>
<feature type="active site" description="Proton acceptor" evidence="1">
    <location>
        <position position="70"/>
    </location>
</feature>
<organism>
    <name type="scientific">Helicobacter pylori (strain HPAG1)</name>
    <dbReference type="NCBI Taxonomy" id="357544"/>
    <lineage>
        <taxon>Bacteria</taxon>
        <taxon>Pseudomonadati</taxon>
        <taxon>Campylobacterota</taxon>
        <taxon>Epsilonproteobacteria</taxon>
        <taxon>Campylobacterales</taxon>
        <taxon>Helicobacteraceae</taxon>
        <taxon>Helicobacter</taxon>
    </lineage>
</organism>
<name>UNG_HELPH</name>
<reference key="1">
    <citation type="journal article" date="2006" name="Proc. Natl. Acad. Sci. U.S.A.">
        <title>The complete genome sequence of a chronic atrophic gastritis Helicobacter pylori strain: evolution during disease progression.</title>
        <authorList>
            <person name="Oh J.D."/>
            <person name="Kling-Baeckhed H."/>
            <person name="Giannakis M."/>
            <person name="Xu J."/>
            <person name="Fulton R.S."/>
            <person name="Fulton L.A."/>
            <person name="Cordum H.S."/>
            <person name="Wang C."/>
            <person name="Elliott G."/>
            <person name="Edwards J."/>
            <person name="Mardis E.R."/>
            <person name="Engstrand L.G."/>
            <person name="Gordon J.I."/>
        </authorList>
    </citation>
    <scope>NUCLEOTIDE SEQUENCE [LARGE SCALE GENOMIC DNA]</scope>
    <source>
        <strain>HPAG1</strain>
    </source>
</reference>
<keyword id="KW-0963">Cytoplasm</keyword>
<keyword id="KW-0227">DNA damage</keyword>
<keyword id="KW-0234">DNA repair</keyword>
<keyword id="KW-0378">Hydrolase</keyword>
<sequence length="233" mass="26215">MKLFDYAPLSLAWREFLQSEFKKPYFLEIEKRYLEALKSPKTIFPKSSNLFYALNLTPPSAVKIILLGQDPYHSTYLENQQELPVAMGLSFSVEKNAPIPPSLKNIFKELHANLGVSVPCCGDLSAWAKRGMLLLNAILSVEKNKAASHKRIGWEAFSDQILMRLFEANAPLIVVLLGKVAQKKIALIPKNKHIIITAPHPSPLSRGFLGSGVFTSIQNAYREVYHKDFDFSL</sequence>